<proteinExistence type="predicted"/>
<dbReference type="EMBL" id="CP000255">
    <property type="protein sequence ID" value="ABD21161.1"/>
    <property type="molecule type" value="Genomic_DNA"/>
</dbReference>
<dbReference type="SMR" id="Q2FDN2"/>
<dbReference type="KEGG" id="saa:SAUSA300_2562"/>
<dbReference type="HOGENOM" id="CLU_217298_1_0_9"/>
<dbReference type="Proteomes" id="UP000001939">
    <property type="component" value="Chromosome"/>
</dbReference>
<dbReference type="NCBIfam" id="NF040843">
    <property type="entry name" value="SE2200_fam"/>
    <property type="match status" value="1"/>
</dbReference>
<accession>Q2FDN2</accession>
<feature type="chain" id="PRO_0000286949" description="Uncharacterized protein SAUSA300_2562">
    <location>
        <begin position="1"/>
        <end position="33"/>
    </location>
</feature>
<sequence>MKKLAVILTLVGGLYFAFKKYQERVNQAPNIEY</sequence>
<name>Y2562_STAA3</name>
<protein>
    <recommendedName>
        <fullName>Uncharacterized protein SAUSA300_2562</fullName>
    </recommendedName>
</protein>
<gene>
    <name type="ordered locus">SAUSA300_2562</name>
</gene>
<reference key="1">
    <citation type="journal article" date="2006" name="Lancet">
        <title>Complete genome sequence of USA300, an epidemic clone of community-acquired meticillin-resistant Staphylococcus aureus.</title>
        <authorList>
            <person name="Diep B.A."/>
            <person name="Gill S.R."/>
            <person name="Chang R.F."/>
            <person name="Phan T.H."/>
            <person name="Chen J.H."/>
            <person name="Davidson M.G."/>
            <person name="Lin F."/>
            <person name="Lin J."/>
            <person name="Carleton H.A."/>
            <person name="Mongodin E.F."/>
            <person name="Sensabaugh G.F."/>
            <person name="Perdreau-Remington F."/>
        </authorList>
    </citation>
    <scope>NUCLEOTIDE SEQUENCE [LARGE SCALE GENOMIC DNA]</scope>
    <source>
        <strain>USA300</strain>
    </source>
</reference>
<organism>
    <name type="scientific">Staphylococcus aureus (strain USA300)</name>
    <dbReference type="NCBI Taxonomy" id="367830"/>
    <lineage>
        <taxon>Bacteria</taxon>
        <taxon>Bacillati</taxon>
        <taxon>Bacillota</taxon>
        <taxon>Bacilli</taxon>
        <taxon>Bacillales</taxon>
        <taxon>Staphylococcaceae</taxon>
        <taxon>Staphylococcus</taxon>
    </lineage>
</organism>